<comment type="function">
    <text evidence="1">Catalyzes the transfer of endogenously produced octanoic acid from octanoyl-acyl-carrier-protein onto the lipoyl domains of lipoate-dependent enzymes. Lipoyl-ACP can also act as a substrate although octanoyl-ACP is likely to be the physiological substrate.</text>
</comment>
<comment type="catalytic activity">
    <reaction evidence="1">
        <text>octanoyl-[ACP] + L-lysyl-[protein] = N(6)-octanoyl-L-lysyl-[protein] + holo-[ACP] + H(+)</text>
        <dbReference type="Rhea" id="RHEA:17665"/>
        <dbReference type="Rhea" id="RHEA-COMP:9636"/>
        <dbReference type="Rhea" id="RHEA-COMP:9685"/>
        <dbReference type="Rhea" id="RHEA-COMP:9752"/>
        <dbReference type="Rhea" id="RHEA-COMP:9928"/>
        <dbReference type="ChEBI" id="CHEBI:15378"/>
        <dbReference type="ChEBI" id="CHEBI:29969"/>
        <dbReference type="ChEBI" id="CHEBI:64479"/>
        <dbReference type="ChEBI" id="CHEBI:78463"/>
        <dbReference type="ChEBI" id="CHEBI:78809"/>
        <dbReference type="EC" id="2.3.1.181"/>
    </reaction>
</comment>
<comment type="pathway">
    <text evidence="1">Protein modification; protein lipoylation via endogenous pathway; protein N(6)-(lipoyl)lysine from octanoyl-[acyl-carrier-protein]: step 1/2.</text>
</comment>
<comment type="subcellular location">
    <subcellularLocation>
        <location evidence="1">Cytoplasm</location>
    </subcellularLocation>
</comment>
<comment type="miscellaneous">
    <text evidence="1">In the reaction, the free carboxyl group of octanoic acid is attached via an amide linkage to the epsilon-amino group of a specific lysine residue of lipoyl domains of lipoate-dependent enzymes.</text>
</comment>
<comment type="similarity">
    <text evidence="1">Belongs to the LipB family.</text>
</comment>
<evidence type="ECO:0000255" key="1">
    <source>
        <dbReference type="HAMAP-Rule" id="MF_00013"/>
    </source>
</evidence>
<evidence type="ECO:0000255" key="2">
    <source>
        <dbReference type="PROSITE-ProRule" id="PRU01067"/>
    </source>
</evidence>
<sequence>MPSAPDAPAAPDAAASVAPNPPAALPVTVRWLGETPYDACFDAMRAFTDARTPDTDDEIWVVEHPPVYTLGQAGNPAHLLVADSGVPLVKVDRGGQITYHGPGQIVAYLLVDLRRRKLMVRTLVTRIEEAVIETLAAYNLASARKAGAPGIYVESGPHRGAKIAALGLKIRNGCSYHGLSVNVKMDLRPFLAINPCGYAGLETIDMASLGATADWHEVAQTLVRRLIAHLDGATAAAALPQQALEQSND</sequence>
<dbReference type="EC" id="2.3.1.181" evidence="1"/>
<dbReference type="EMBL" id="CP000526">
    <property type="protein sequence ID" value="ABM52307.1"/>
    <property type="molecule type" value="Genomic_DNA"/>
</dbReference>
<dbReference type="SMR" id="A1V017"/>
<dbReference type="KEGG" id="bmv:BMASAVP1_A0219"/>
<dbReference type="HOGENOM" id="CLU_035168_3_1_4"/>
<dbReference type="UniPathway" id="UPA00538">
    <property type="reaction ID" value="UER00592"/>
</dbReference>
<dbReference type="GO" id="GO:0005737">
    <property type="term" value="C:cytoplasm"/>
    <property type="evidence" value="ECO:0007669"/>
    <property type="project" value="UniProtKB-SubCell"/>
</dbReference>
<dbReference type="GO" id="GO:0033819">
    <property type="term" value="F:lipoyl(octanoyl) transferase activity"/>
    <property type="evidence" value="ECO:0007669"/>
    <property type="project" value="UniProtKB-EC"/>
</dbReference>
<dbReference type="GO" id="GO:0036211">
    <property type="term" value="P:protein modification process"/>
    <property type="evidence" value="ECO:0007669"/>
    <property type="project" value="InterPro"/>
</dbReference>
<dbReference type="CDD" id="cd16444">
    <property type="entry name" value="LipB"/>
    <property type="match status" value="1"/>
</dbReference>
<dbReference type="FunFam" id="3.30.930.10:FF:000020">
    <property type="entry name" value="Octanoyltransferase"/>
    <property type="match status" value="1"/>
</dbReference>
<dbReference type="Gene3D" id="3.30.930.10">
    <property type="entry name" value="Bira Bifunctional Protein, Domain 2"/>
    <property type="match status" value="1"/>
</dbReference>
<dbReference type="HAMAP" id="MF_00013">
    <property type="entry name" value="LipB"/>
    <property type="match status" value="1"/>
</dbReference>
<dbReference type="InterPro" id="IPR045864">
    <property type="entry name" value="aa-tRNA-synth_II/BPL/LPL"/>
</dbReference>
<dbReference type="InterPro" id="IPR004143">
    <property type="entry name" value="BPL_LPL_catalytic"/>
</dbReference>
<dbReference type="InterPro" id="IPR000544">
    <property type="entry name" value="Octanoyltransferase"/>
</dbReference>
<dbReference type="InterPro" id="IPR020605">
    <property type="entry name" value="Octanoyltransferase_CS"/>
</dbReference>
<dbReference type="NCBIfam" id="TIGR00214">
    <property type="entry name" value="lipB"/>
    <property type="match status" value="1"/>
</dbReference>
<dbReference type="NCBIfam" id="NF010922">
    <property type="entry name" value="PRK14342.1"/>
    <property type="match status" value="1"/>
</dbReference>
<dbReference type="NCBIfam" id="NF010923">
    <property type="entry name" value="PRK14343.1"/>
    <property type="match status" value="1"/>
</dbReference>
<dbReference type="PANTHER" id="PTHR10993:SF7">
    <property type="entry name" value="LIPOYLTRANSFERASE 2, MITOCHONDRIAL-RELATED"/>
    <property type="match status" value="1"/>
</dbReference>
<dbReference type="PANTHER" id="PTHR10993">
    <property type="entry name" value="OCTANOYLTRANSFERASE"/>
    <property type="match status" value="1"/>
</dbReference>
<dbReference type="Pfam" id="PF21948">
    <property type="entry name" value="LplA-B_cat"/>
    <property type="match status" value="1"/>
</dbReference>
<dbReference type="PIRSF" id="PIRSF016262">
    <property type="entry name" value="LPLase"/>
    <property type="match status" value="1"/>
</dbReference>
<dbReference type="SUPFAM" id="SSF55681">
    <property type="entry name" value="Class II aaRS and biotin synthetases"/>
    <property type="match status" value="1"/>
</dbReference>
<dbReference type="PROSITE" id="PS51733">
    <property type="entry name" value="BPL_LPL_CATALYTIC"/>
    <property type="match status" value="1"/>
</dbReference>
<dbReference type="PROSITE" id="PS01313">
    <property type="entry name" value="LIPB"/>
    <property type="match status" value="1"/>
</dbReference>
<gene>
    <name evidence="1" type="primary">lipB</name>
    <name type="ordered locus">BMASAVP1_A0219</name>
</gene>
<name>LIPB_BURMS</name>
<organism>
    <name type="scientific">Burkholderia mallei (strain SAVP1)</name>
    <dbReference type="NCBI Taxonomy" id="320388"/>
    <lineage>
        <taxon>Bacteria</taxon>
        <taxon>Pseudomonadati</taxon>
        <taxon>Pseudomonadota</taxon>
        <taxon>Betaproteobacteria</taxon>
        <taxon>Burkholderiales</taxon>
        <taxon>Burkholderiaceae</taxon>
        <taxon>Burkholderia</taxon>
        <taxon>pseudomallei group</taxon>
    </lineage>
</organism>
<proteinExistence type="inferred from homology"/>
<protein>
    <recommendedName>
        <fullName evidence="1">Octanoyltransferase</fullName>
        <ecNumber evidence="1">2.3.1.181</ecNumber>
    </recommendedName>
    <alternativeName>
        <fullName evidence="1">Lipoate-protein ligase B</fullName>
    </alternativeName>
    <alternativeName>
        <fullName evidence="1">Lipoyl/octanoyl transferase</fullName>
    </alternativeName>
    <alternativeName>
        <fullName evidence="1">Octanoyl-[acyl-carrier-protein]-protein N-octanoyltransferase</fullName>
    </alternativeName>
</protein>
<keyword id="KW-0012">Acyltransferase</keyword>
<keyword id="KW-0963">Cytoplasm</keyword>
<keyword id="KW-0808">Transferase</keyword>
<reference key="1">
    <citation type="journal article" date="2010" name="Genome Biol. Evol.">
        <title>Continuing evolution of Burkholderia mallei through genome reduction and large-scale rearrangements.</title>
        <authorList>
            <person name="Losada L."/>
            <person name="Ronning C.M."/>
            <person name="DeShazer D."/>
            <person name="Woods D."/>
            <person name="Fedorova N."/>
            <person name="Kim H.S."/>
            <person name="Shabalina S.A."/>
            <person name="Pearson T.R."/>
            <person name="Brinkac L."/>
            <person name="Tan P."/>
            <person name="Nandi T."/>
            <person name="Crabtree J."/>
            <person name="Badger J."/>
            <person name="Beckstrom-Sternberg S."/>
            <person name="Saqib M."/>
            <person name="Schutzer S.E."/>
            <person name="Keim P."/>
            <person name="Nierman W.C."/>
        </authorList>
    </citation>
    <scope>NUCLEOTIDE SEQUENCE [LARGE SCALE GENOMIC DNA]</scope>
    <source>
        <strain>SAVP1</strain>
    </source>
</reference>
<accession>A1V017</accession>
<feature type="chain" id="PRO_1000001093" description="Octanoyltransferase">
    <location>
        <begin position="1"/>
        <end position="249"/>
    </location>
</feature>
<feature type="domain" description="BPL/LPL catalytic" evidence="2">
    <location>
        <begin position="53"/>
        <end position="234"/>
    </location>
</feature>
<feature type="active site" description="Acyl-thioester intermediate" evidence="1">
    <location>
        <position position="196"/>
    </location>
</feature>
<feature type="binding site" evidence="1">
    <location>
        <begin position="93"/>
        <end position="100"/>
    </location>
    <ligand>
        <name>substrate</name>
    </ligand>
</feature>
<feature type="binding site" evidence="1">
    <location>
        <begin position="165"/>
        <end position="167"/>
    </location>
    <ligand>
        <name>substrate</name>
    </ligand>
</feature>
<feature type="binding site" evidence="1">
    <location>
        <begin position="178"/>
        <end position="180"/>
    </location>
    <ligand>
        <name>substrate</name>
    </ligand>
</feature>
<feature type="site" description="Lowers pKa of active site Cys" evidence="1">
    <location>
        <position position="162"/>
    </location>
</feature>